<comment type="catalytic activity">
    <reaction>
        <text>Hydrolysis of terminal (1-&gt;4)-linked alpha-D-glucose residues successively from non-reducing ends of the chains with release of beta-D-glucose.</text>
        <dbReference type="EC" id="3.2.1.3"/>
    </reaction>
</comment>
<comment type="similarity">
    <text evidence="4">Belongs to the glycosyl hydrolase 15 family.</text>
</comment>
<gene>
    <name type="primary">GAA</name>
</gene>
<name>AMYG_BLAAD</name>
<feature type="signal peptide" evidence="1">
    <location>
        <begin position="1"/>
        <end position="18"/>
    </location>
</feature>
<feature type="chain" id="PRO_0000001458" description="Glucoamylase">
    <location>
        <begin position="19"/>
        <end position="624"/>
    </location>
</feature>
<feature type="domain" description="CBM21" evidence="2">
    <location>
        <begin position="26"/>
        <end position="132"/>
    </location>
</feature>
<feature type="active site" description="Proton acceptor" evidence="3">
    <location>
        <position position="340"/>
    </location>
</feature>
<feature type="active site" description="Proton donor" evidence="3">
    <location>
        <position position="343"/>
    </location>
</feature>
<feature type="glycosylation site" description="N-linked (GlcNAc...) asparagine" evidence="1">
    <location>
        <position position="54"/>
    </location>
</feature>
<feature type="glycosylation site" description="N-linked (GlcNAc...) asparagine" evidence="1">
    <location>
        <position position="70"/>
    </location>
</feature>
<feature type="glycosylation site" description="N-linked (GlcNAc...) asparagine" evidence="1">
    <location>
        <position position="98"/>
    </location>
</feature>
<feature type="glycosylation site" description="N-linked (GlcNAc...) asparagine" evidence="1">
    <location>
        <position position="111"/>
    </location>
</feature>
<feature type="glycosylation site" description="N-linked (GlcNAc...) asparagine" evidence="1">
    <location>
        <position position="168"/>
    </location>
</feature>
<feature type="glycosylation site" description="N-linked (GlcNAc...) asparagine" evidence="1">
    <location>
        <position position="267"/>
    </location>
</feature>
<feature type="glycosylation site" description="N-linked (GlcNAc...) asparagine" evidence="1">
    <location>
        <position position="333"/>
    </location>
</feature>
<feature type="glycosylation site" description="N-linked (GlcNAc...) asparagine" evidence="1">
    <location>
        <position position="460"/>
    </location>
</feature>
<feature type="glycosylation site" description="N-linked (GlcNAc...) asparagine" evidence="1">
    <location>
        <position position="582"/>
    </location>
</feature>
<reference key="1">
    <citation type="journal article" date="1996" name="Appl. Microbiol. Biotechnol.">
        <title>Cloning and expression of an Arxula adeninivorans glucoamylase gene in Saccharomyces cerevisiae.</title>
        <authorList>
            <person name="Bui Minh D."/>
            <person name="Kunze I."/>
            <person name="Foerster S."/>
            <person name="Wartmann T."/>
            <person name="Horstmann C."/>
            <person name="Manteuffel R."/>
            <person name="Kunze G."/>
        </authorList>
    </citation>
    <scope>NUCLEOTIDE SEQUENCE [GENOMIC DNA]</scope>
    <source>
        <strain>LS3</strain>
    </source>
</reference>
<dbReference type="EC" id="3.2.1.3"/>
<dbReference type="EMBL" id="Z46901">
    <property type="protein sequence ID" value="CAA86997.1"/>
    <property type="molecule type" value="Genomic_DNA"/>
</dbReference>
<dbReference type="SMR" id="P42042"/>
<dbReference type="CAZy" id="CBM21">
    <property type="family name" value="Carbohydrate-Binding Module Family 21"/>
</dbReference>
<dbReference type="CAZy" id="GH15">
    <property type="family name" value="Glycoside Hydrolase Family 15"/>
</dbReference>
<dbReference type="GlyCosmos" id="P42042">
    <property type="glycosylation" value="9 sites, No reported glycans"/>
</dbReference>
<dbReference type="PhylomeDB" id="P42042"/>
<dbReference type="GO" id="GO:0000324">
    <property type="term" value="C:fungal-type vacuole"/>
    <property type="evidence" value="ECO:0007669"/>
    <property type="project" value="TreeGrafter"/>
</dbReference>
<dbReference type="GO" id="GO:0004339">
    <property type="term" value="F:glucan 1,4-alpha-glucosidase activity"/>
    <property type="evidence" value="ECO:0007669"/>
    <property type="project" value="UniProtKB-EC"/>
</dbReference>
<dbReference type="GO" id="GO:0000272">
    <property type="term" value="P:polysaccharide catabolic process"/>
    <property type="evidence" value="ECO:0007669"/>
    <property type="project" value="UniProtKB-KW"/>
</dbReference>
<dbReference type="Gene3D" id="1.50.10.10">
    <property type="match status" value="1"/>
</dbReference>
<dbReference type="Gene3D" id="2.60.40.2440">
    <property type="entry name" value="Carbohydrate binding type-21 domain"/>
    <property type="match status" value="1"/>
</dbReference>
<dbReference type="InterPro" id="IPR008928">
    <property type="entry name" value="6-hairpin_glycosidase_sf"/>
</dbReference>
<dbReference type="InterPro" id="IPR012341">
    <property type="entry name" value="6hp_glycosidase-like_sf"/>
</dbReference>
<dbReference type="InterPro" id="IPR005036">
    <property type="entry name" value="CBM21_dom"/>
</dbReference>
<dbReference type="InterPro" id="IPR038175">
    <property type="entry name" value="CBM21_dom_sf"/>
</dbReference>
<dbReference type="InterPro" id="IPR011613">
    <property type="entry name" value="GH15-like"/>
</dbReference>
<dbReference type="InterPro" id="IPR000165">
    <property type="entry name" value="Glucoamylase"/>
</dbReference>
<dbReference type="InterPro" id="IPR046966">
    <property type="entry name" value="Glucoamylase_active_site"/>
</dbReference>
<dbReference type="PANTHER" id="PTHR31616:SF9">
    <property type="entry name" value="GLUCOAMYLASE, INTRACELLULAR SPORULATION-SPECIFIC"/>
    <property type="match status" value="1"/>
</dbReference>
<dbReference type="PANTHER" id="PTHR31616">
    <property type="entry name" value="TREHALASE"/>
    <property type="match status" value="1"/>
</dbReference>
<dbReference type="Pfam" id="PF00723">
    <property type="entry name" value="Glyco_hydro_15"/>
    <property type="match status" value="1"/>
</dbReference>
<dbReference type="PRINTS" id="PR00736">
    <property type="entry name" value="GLHYDRLASE15"/>
</dbReference>
<dbReference type="SUPFAM" id="SSF48208">
    <property type="entry name" value="Six-hairpin glycosidases"/>
    <property type="match status" value="1"/>
</dbReference>
<dbReference type="PROSITE" id="PS51159">
    <property type="entry name" value="CBM21"/>
    <property type="match status" value="1"/>
</dbReference>
<dbReference type="PROSITE" id="PS00820">
    <property type="entry name" value="GLUCOAMYLASE"/>
    <property type="match status" value="1"/>
</dbReference>
<organism>
    <name type="scientific">Blastobotrys adeninivorans</name>
    <name type="common">Yeast</name>
    <name type="synonym">Arxula adeninivorans</name>
    <dbReference type="NCBI Taxonomy" id="409370"/>
    <lineage>
        <taxon>Eukaryota</taxon>
        <taxon>Fungi</taxon>
        <taxon>Dikarya</taxon>
        <taxon>Ascomycota</taxon>
        <taxon>Saccharomycotina</taxon>
        <taxon>Dipodascomycetes</taxon>
        <taxon>Dipodascales</taxon>
        <taxon>Trichomonascaceae</taxon>
        <taxon>Blastobotrys</taxon>
    </lineage>
</organism>
<sequence>MRQFLALAAAASIAVADSCHTFTLANSPPDDKAVALSSYSYCGGYLSASAFVKNLSYDKLVTLYWTNADNKSTPLNAGSLDYVKAASDDQSWELWSLNVTTVPDGVDALLNITYVAASIGKTNSQQLNVQVEATGDPIPTPQIPTIYKPYASPSDFSDDITNWLKPSNDSQTGIAKSFLFNNINIPGAAPGTVIAAQSYSEPDYAYTWVRDASLVMDVVNRLYSSAKSEEKRQLYEKILFQYAKAGAQEQNDPTAISGMGEPKFYLNNTAFTGSWGRPQNDGPATRAITLIEFANAYLANGGSQDTVREQLYDSDKYPQVAPIKKDLQFVASNWSSPSFDLWEEEESAHFYTRLVQRKALLLGADFANDMGDHELSDKLKTQASKLSDTLPEFWDSARQLILYEYGPVLRGKYSYKDISVVLGVMHGYANDNVFSYTNDQILATAYQVSTSFLDVYKVANTTSDESGKPLGIPVGRYPEDVYDGVGTSQGNPWYLTTMAMAEFLYRSVQEFEDAGSIIISDTSLPFWKYFASSVDHKAGAKYNKNDQSFKTSLKSLTGWGDAFMRRAKYHTPSSGHMSEEFNRTTGEPRGAKDLTWSYASLLSAAFAREELRNQKNYLTNVADL</sequence>
<evidence type="ECO:0000255" key="1"/>
<evidence type="ECO:0000255" key="2">
    <source>
        <dbReference type="PROSITE-ProRule" id="PRU00491"/>
    </source>
</evidence>
<evidence type="ECO:0000255" key="3">
    <source>
        <dbReference type="PROSITE-ProRule" id="PRU10051"/>
    </source>
</evidence>
<evidence type="ECO:0000305" key="4"/>
<keyword id="KW-0119">Carbohydrate metabolism</keyword>
<keyword id="KW-0325">Glycoprotein</keyword>
<keyword id="KW-0326">Glycosidase</keyword>
<keyword id="KW-0378">Hydrolase</keyword>
<keyword id="KW-0624">Polysaccharide degradation</keyword>
<keyword id="KW-0732">Signal</keyword>
<protein>
    <recommendedName>
        <fullName>Glucoamylase</fullName>
        <ecNumber>3.2.1.3</ecNumber>
    </recommendedName>
    <alternativeName>
        <fullName>1,4-alpha-D-glucan glucohydrolase</fullName>
    </alternativeName>
    <alternativeName>
        <fullName>Glucan 1,4-alpha-glucosidase</fullName>
    </alternativeName>
</protein>
<proteinExistence type="inferred from homology"/>
<accession>P42042</accession>